<reference key="1">
    <citation type="journal article" date="1979" name="Hoppe-Seyler's Z. Physiol. Chem.">
        <title>Snake venom. The amino-acid sequence of the subunits of two reduced and S-carboxymethylated proteins (C8S2 and C9S3) from Dendroaspis angusticeps venom.</title>
        <authorList>
            <person name="Joubert F.J."/>
            <person name="Viljoen C.C."/>
        </authorList>
    </citation>
    <scope>PROTEIN SEQUENCE</scope>
    <scope>FUNCTION</scope>
    <scope>SUBCELLULAR LOCATION</scope>
    <source>
        <tissue>Venom</tissue>
    </source>
</reference>
<dbReference type="SMR" id="P01408"/>
<dbReference type="GO" id="GO:0005576">
    <property type="term" value="C:extracellular region"/>
    <property type="evidence" value="ECO:0007669"/>
    <property type="project" value="UniProtKB-SubCell"/>
</dbReference>
<dbReference type="GO" id="GO:0090729">
    <property type="term" value="F:toxin activity"/>
    <property type="evidence" value="ECO:0007669"/>
    <property type="project" value="UniProtKB-KW"/>
</dbReference>
<dbReference type="CDD" id="cd00206">
    <property type="entry name" value="TFP_snake_toxin"/>
    <property type="match status" value="1"/>
</dbReference>
<dbReference type="Gene3D" id="2.10.60.10">
    <property type="entry name" value="CD59"/>
    <property type="match status" value="1"/>
</dbReference>
<dbReference type="InterPro" id="IPR003571">
    <property type="entry name" value="Snake_3FTx"/>
</dbReference>
<dbReference type="InterPro" id="IPR045860">
    <property type="entry name" value="Snake_toxin-like_sf"/>
</dbReference>
<dbReference type="InterPro" id="IPR018354">
    <property type="entry name" value="Snake_toxin_con_site"/>
</dbReference>
<dbReference type="InterPro" id="IPR054131">
    <property type="entry name" value="Toxin_cobra-type"/>
</dbReference>
<dbReference type="Pfam" id="PF21947">
    <property type="entry name" value="Toxin_cobra-type"/>
    <property type="match status" value="1"/>
</dbReference>
<dbReference type="SUPFAM" id="SSF57302">
    <property type="entry name" value="Snake toxin-like"/>
    <property type="match status" value="1"/>
</dbReference>
<dbReference type="PROSITE" id="PS00272">
    <property type="entry name" value="SNAKE_TOXIN"/>
    <property type="match status" value="1"/>
</dbReference>
<protein>
    <recommendedName>
        <fullName>Synergistic-type venom protein C9S3, chain 1</fullName>
    </recommendedName>
</protein>
<name>3SIY3_DENAN</name>
<organism>
    <name type="scientific">Dendroaspis angusticeps</name>
    <name type="common">Eastern green mamba</name>
    <name type="synonym">Naja angusticeps</name>
    <dbReference type="NCBI Taxonomy" id="8618"/>
    <lineage>
        <taxon>Eukaryota</taxon>
        <taxon>Metazoa</taxon>
        <taxon>Chordata</taxon>
        <taxon>Craniata</taxon>
        <taxon>Vertebrata</taxon>
        <taxon>Euteleostomi</taxon>
        <taxon>Lepidosauria</taxon>
        <taxon>Squamata</taxon>
        <taxon>Bifurcata</taxon>
        <taxon>Unidentata</taxon>
        <taxon>Episquamata</taxon>
        <taxon>Toxicofera</taxon>
        <taxon>Serpentes</taxon>
        <taxon>Colubroidea</taxon>
        <taxon>Elapidae</taxon>
        <taxon>Elapinae</taxon>
        <taxon>Dendroaspis</taxon>
    </lineage>
</organism>
<keyword id="KW-0903">Direct protein sequencing</keyword>
<keyword id="KW-1015">Disulfide bond</keyword>
<keyword id="KW-0964">Secreted</keyword>
<keyword id="KW-0800">Toxin</keyword>
<feature type="chain" id="PRO_0000093621" description="Synergistic-type venom protein C9S3, chain 1" evidence="2">
    <location>
        <begin position="1"/>
        <end position="63"/>
    </location>
</feature>
<feature type="disulfide bond" evidence="1">
    <location>
        <begin position="3"/>
        <end position="24"/>
    </location>
</feature>
<feature type="disulfide bond" evidence="1">
    <location>
        <begin position="17"/>
        <end position="42"/>
    </location>
</feature>
<feature type="disulfide bond" evidence="1">
    <location>
        <begin position="46"/>
        <end position="57"/>
    </location>
</feature>
<feature type="disulfide bond" description="Interchain" evidence="1">
    <location>
        <position position="54"/>
    </location>
</feature>
<evidence type="ECO:0000250" key="1">
    <source>
        <dbReference type="UniProtKB" id="P0DQP2"/>
    </source>
</evidence>
<evidence type="ECO:0000269" key="2">
    <source>
    </source>
</evidence>
<evidence type="ECO:0000305" key="3"/>
<evidence type="ECO:0000305" key="4">
    <source>
    </source>
</evidence>
<comment type="function">
    <text evidence="2">This protein shows a synergetic toxic effect in that it enhances the toxicity of other toxins.</text>
</comment>
<comment type="subunit">
    <text evidence="1">Heterodimer of C9S3 chain 1 and chain 2 (AC P01409); disulfide-linked.</text>
</comment>
<comment type="subcellular location">
    <subcellularLocation>
        <location evidence="2">Secreted</location>
    </subcellularLocation>
</comment>
<comment type="tissue specificity">
    <text evidence="4">Expressed by the venom gland.</text>
</comment>
<comment type="miscellaneous">
    <text evidence="3">Is classified as a P-type cytotoxin, since a proline residue stands at position 33 (Pro-31 in standard classification).</text>
</comment>
<comment type="similarity">
    <text evidence="3">Belongs to the three-finger toxin family. Short-chain subfamily. Aminergic toxin sub-subfamily.</text>
</comment>
<accession>P01408</accession>
<proteinExistence type="evidence at protein level"/>
<sequence length="63" mass="6785">LTCVTGKSIGGISTEECAAGQKICFKKWTKMGPKLYDVSRGCTATCPKADEYGCVKCCKTDRN</sequence>